<dbReference type="EC" id="2.7.7.105" evidence="1"/>
<dbReference type="EMBL" id="LT708304">
    <property type="protein sequence ID" value="SIU01631.1"/>
    <property type="molecule type" value="Genomic_DNA"/>
</dbReference>
<dbReference type="RefSeq" id="NP_856652.1">
    <property type="nucleotide sequence ID" value="NC_002945.3"/>
</dbReference>
<dbReference type="SMR" id="Q7TXH8"/>
<dbReference type="KEGG" id="mbo:BQ2027_MB3007"/>
<dbReference type="PATRIC" id="fig|233413.5.peg.3306"/>
<dbReference type="UniPathway" id="UPA00071"/>
<dbReference type="Proteomes" id="UP000001419">
    <property type="component" value="Chromosome"/>
</dbReference>
<dbReference type="GO" id="GO:0005525">
    <property type="term" value="F:GTP binding"/>
    <property type="evidence" value="ECO:0007669"/>
    <property type="project" value="UniProtKB-KW"/>
</dbReference>
<dbReference type="GO" id="GO:0043814">
    <property type="term" value="F:phospholactate guanylyltransferase activity"/>
    <property type="evidence" value="ECO:0007669"/>
    <property type="project" value="InterPro"/>
</dbReference>
<dbReference type="GO" id="GO:0052645">
    <property type="term" value="P:F420-0 metabolic process"/>
    <property type="evidence" value="ECO:0007669"/>
    <property type="project" value="UniProtKB-UniRule"/>
</dbReference>
<dbReference type="FunFam" id="3.90.550.10:FF:000190">
    <property type="entry name" value="2-phospho-L-lactate guanylyltransferase"/>
    <property type="match status" value="1"/>
</dbReference>
<dbReference type="Gene3D" id="3.90.550.10">
    <property type="entry name" value="Spore Coat Polysaccharide Biosynthesis Protein SpsA, Chain A"/>
    <property type="match status" value="1"/>
</dbReference>
<dbReference type="HAMAP" id="MF_02114">
    <property type="entry name" value="CofC"/>
    <property type="match status" value="1"/>
</dbReference>
<dbReference type="InterPro" id="IPR002835">
    <property type="entry name" value="CofC"/>
</dbReference>
<dbReference type="InterPro" id="IPR029044">
    <property type="entry name" value="Nucleotide-diphossugar_trans"/>
</dbReference>
<dbReference type="NCBIfam" id="TIGR03552">
    <property type="entry name" value="F420_cofC"/>
    <property type="match status" value="1"/>
</dbReference>
<dbReference type="PANTHER" id="PTHR40392">
    <property type="entry name" value="2-PHOSPHO-L-LACTATE GUANYLYLTRANSFERASE"/>
    <property type="match status" value="1"/>
</dbReference>
<dbReference type="PANTHER" id="PTHR40392:SF1">
    <property type="entry name" value="2-PHOSPHO-L-LACTATE GUANYLYLTRANSFERASE"/>
    <property type="match status" value="1"/>
</dbReference>
<dbReference type="Pfam" id="PF01983">
    <property type="entry name" value="CofC"/>
    <property type="match status" value="1"/>
</dbReference>
<dbReference type="SUPFAM" id="SSF53448">
    <property type="entry name" value="Nucleotide-diphospho-sugar transferases"/>
    <property type="match status" value="1"/>
</dbReference>
<gene>
    <name evidence="1" type="primary">fbiD</name>
    <name type="ordered locus">BQ2027_MB3007</name>
</gene>
<comment type="function">
    <text evidence="1">Guanylyltransferase that catalyzes the activation of phosphoenolpyruvate (PEP) as enolpyruvoyl-2-diphospho-5'-guanosine, via the condensation of PEP with GTP. It is involved in the biosynthesis of coenzyme F420, a hydride carrier cofactor.</text>
</comment>
<comment type="catalytic activity">
    <reaction evidence="1">
        <text>phosphoenolpyruvate + GTP + H(+) = enolpyruvoyl-2-diphospho-5'-guanosine + diphosphate</text>
        <dbReference type="Rhea" id="RHEA:30519"/>
        <dbReference type="ChEBI" id="CHEBI:15378"/>
        <dbReference type="ChEBI" id="CHEBI:33019"/>
        <dbReference type="ChEBI" id="CHEBI:37565"/>
        <dbReference type="ChEBI" id="CHEBI:58702"/>
        <dbReference type="ChEBI" id="CHEBI:143701"/>
        <dbReference type="EC" id="2.7.7.105"/>
    </reaction>
</comment>
<comment type="pathway">
    <text evidence="1">Cofactor biosynthesis; coenzyme F420 biosynthesis.</text>
</comment>
<comment type="similarity">
    <text evidence="1">Belongs to the CofC family.</text>
</comment>
<accession>Q7TXH8</accession>
<accession>A0A1R3Y2S2</accession>
<accession>X2BMR6</accession>
<keyword id="KW-0342">GTP-binding</keyword>
<keyword id="KW-0547">Nucleotide-binding</keyword>
<keyword id="KW-0548">Nucleotidyltransferase</keyword>
<keyword id="KW-1185">Reference proteome</keyword>
<keyword id="KW-0808">Transferase</keyword>
<reference key="1">
    <citation type="journal article" date="2003" name="Proc. Natl. Acad. Sci. U.S.A.">
        <title>The complete genome sequence of Mycobacterium bovis.</title>
        <authorList>
            <person name="Garnier T."/>
            <person name="Eiglmeier K."/>
            <person name="Camus J.-C."/>
            <person name="Medina N."/>
            <person name="Mansoor H."/>
            <person name="Pryor M."/>
            <person name="Duthoy S."/>
            <person name="Grondin S."/>
            <person name="Lacroix C."/>
            <person name="Monsempe C."/>
            <person name="Simon S."/>
            <person name="Harris B."/>
            <person name="Atkin R."/>
            <person name="Doggett J."/>
            <person name="Mayes R."/>
            <person name="Keating L."/>
            <person name="Wheeler P.R."/>
            <person name="Parkhill J."/>
            <person name="Barrell B.G."/>
            <person name="Cole S.T."/>
            <person name="Gordon S.V."/>
            <person name="Hewinson R.G."/>
        </authorList>
    </citation>
    <scope>NUCLEOTIDE SEQUENCE [LARGE SCALE GENOMIC DNA]</scope>
    <source>
        <strain>ATCC BAA-935 / AF2122/97</strain>
    </source>
</reference>
<reference key="2">
    <citation type="journal article" date="2017" name="Genome Announc.">
        <title>Updated reference genome sequence and annotation of Mycobacterium bovis AF2122/97.</title>
        <authorList>
            <person name="Malone K.M."/>
            <person name="Farrell D."/>
            <person name="Stuber T.P."/>
            <person name="Schubert O.T."/>
            <person name="Aebersold R."/>
            <person name="Robbe-Austerman S."/>
            <person name="Gordon S.V."/>
        </authorList>
    </citation>
    <scope>NUCLEOTIDE SEQUENCE [LARGE SCALE GENOMIC DNA]</scope>
    <scope>GENOME REANNOTATION</scope>
    <source>
        <strain>ATCC BAA-935 / AF2122/97</strain>
    </source>
</reference>
<feature type="chain" id="PRO_0000398687" description="Phosphoenolpyruvate guanylyltransferase">
    <location>
        <begin position="1"/>
        <end position="214"/>
    </location>
</feature>
<feature type="binding site" evidence="1">
    <location>
        <position position="148"/>
    </location>
    <ligand>
        <name>phosphoenolpyruvate</name>
        <dbReference type="ChEBI" id="CHEBI:58702"/>
    </ligand>
</feature>
<feature type="binding site" evidence="1">
    <location>
        <position position="163"/>
    </location>
    <ligand>
        <name>phosphoenolpyruvate</name>
        <dbReference type="ChEBI" id="CHEBI:58702"/>
    </ligand>
</feature>
<feature type="binding site" evidence="1">
    <location>
        <position position="166"/>
    </location>
    <ligand>
        <name>phosphoenolpyruvate</name>
        <dbReference type="ChEBI" id="CHEBI:58702"/>
    </ligand>
</feature>
<organism>
    <name type="scientific">Mycobacterium bovis (strain ATCC BAA-935 / AF2122/97)</name>
    <dbReference type="NCBI Taxonomy" id="233413"/>
    <lineage>
        <taxon>Bacteria</taxon>
        <taxon>Bacillati</taxon>
        <taxon>Actinomycetota</taxon>
        <taxon>Actinomycetes</taxon>
        <taxon>Mycobacteriales</taxon>
        <taxon>Mycobacteriaceae</taxon>
        <taxon>Mycobacterium</taxon>
        <taxon>Mycobacterium tuberculosis complex</taxon>
    </lineage>
</organism>
<protein>
    <recommendedName>
        <fullName evidence="1">Phosphoenolpyruvate guanylyltransferase</fullName>
        <shortName evidence="1">PEP guanylyltransferase</shortName>
        <ecNumber evidence="1">2.7.7.105</ecNumber>
    </recommendedName>
</protein>
<sequence length="214" mass="21819">MSGTPDDGDIGLIIAVKRLAAAKTRLAPVFSAQTRENVVLAMLVDTLTAAAGVGSLRSITVITPDEAAAAAAAGLGADVLADPTPEDDPDPLNTAITAAERVVAEGASNIVVLQGDLPALQTQELAEAISAARHHRRSFVADRLGTGTAVLCAFGTALHPRFGPDSSARHRRSGAVELTGAWPGLRCDVDTPADLTAARQLGVGPATARAVAHR</sequence>
<evidence type="ECO:0000255" key="1">
    <source>
        <dbReference type="HAMAP-Rule" id="MF_02114"/>
    </source>
</evidence>
<name>FBID_MYCBO</name>
<proteinExistence type="inferred from homology"/>